<reference key="1">
    <citation type="journal article" date="2006" name="PLoS Genet.">
        <title>Comparative genomics of emerging human ehrlichiosis agents.</title>
        <authorList>
            <person name="Dunning Hotopp J.C."/>
            <person name="Lin M."/>
            <person name="Madupu R."/>
            <person name="Crabtree J."/>
            <person name="Angiuoli S.V."/>
            <person name="Eisen J.A."/>
            <person name="Seshadri R."/>
            <person name="Ren Q."/>
            <person name="Wu M."/>
            <person name="Utterback T.R."/>
            <person name="Smith S."/>
            <person name="Lewis M."/>
            <person name="Khouri H."/>
            <person name="Zhang C."/>
            <person name="Niu H."/>
            <person name="Lin Q."/>
            <person name="Ohashi N."/>
            <person name="Zhi N."/>
            <person name="Nelson W.C."/>
            <person name="Brinkac L.M."/>
            <person name="Dodson R.J."/>
            <person name="Rosovitz M.J."/>
            <person name="Sundaram J.P."/>
            <person name="Daugherty S.C."/>
            <person name="Davidsen T."/>
            <person name="Durkin A.S."/>
            <person name="Gwinn M.L."/>
            <person name="Haft D.H."/>
            <person name="Selengut J.D."/>
            <person name="Sullivan S.A."/>
            <person name="Zafar N."/>
            <person name="Zhou L."/>
            <person name="Benahmed F."/>
            <person name="Forberger H."/>
            <person name="Halpin R."/>
            <person name="Mulligan S."/>
            <person name="Robinson J."/>
            <person name="White O."/>
            <person name="Rikihisa Y."/>
            <person name="Tettelin H."/>
        </authorList>
    </citation>
    <scope>NUCLEOTIDE SEQUENCE [LARGE SCALE GENOMIC DNA]</scope>
    <source>
        <strain>ATCC VR-367 / Miyayama</strain>
    </source>
</reference>
<feature type="chain" id="PRO_0000329732" description="Polyribonucleotide nucleotidyltransferase">
    <location>
        <begin position="1"/>
        <end position="757"/>
    </location>
</feature>
<feature type="domain" description="KH" evidence="1">
    <location>
        <begin position="556"/>
        <end position="615"/>
    </location>
</feature>
<feature type="domain" description="S1 motif" evidence="1">
    <location>
        <begin position="632"/>
        <end position="700"/>
    </location>
</feature>
<feature type="region of interest" description="Disordered" evidence="2">
    <location>
        <begin position="702"/>
        <end position="757"/>
    </location>
</feature>
<feature type="compositionally biased region" description="Basic residues" evidence="2">
    <location>
        <begin position="715"/>
        <end position="725"/>
    </location>
</feature>
<feature type="compositionally biased region" description="Polar residues" evidence="2">
    <location>
        <begin position="732"/>
        <end position="751"/>
    </location>
</feature>
<feature type="binding site" evidence="1">
    <location>
        <position position="489"/>
    </location>
    <ligand>
        <name>Mg(2+)</name>
        <dbReference type="ChEBI" id="CHEBI:18420"/>
    </ligand>
</feature>
<feature type="binding site" evidence="1">
    <location>
        <position position="495"/>
    </location>
    <ligand>
        <name>Mg(2+)</name>
        <dbReference type="ChEBI" id="CHEBI:18420"/>
    </ligand>
</feature>
<proteinExistence type="inferred from homology"/>
<organism>
    <name type="scientific">Neorickettsia sennetsu (strain ATCC VR-367 / Miyayama)</name>
    <name type="common">Ehrlichia sennetsu</name>
    <dbReference type="NCBI Taxonomy" id="222891"/>
    <lineage>
        <taxon>Bacteria</taxon>
        <taxon>Pseudomonadati</taxon>
        <taxon>Pseudomonadota</taxon>
        <taxon>Alphaproteobacteria</taxon>
        <taxon>Rickettsiales</taxon>
        <taxon>Anaplasmataceae</taxon>
        <taxon>Neorickettsia</taxon>
    </lineage>
</organism>
<protein>
    <recommendedName>
        <fullName evidence="1">Polyribonucleotide nucleotidyltransferase</fullName>
        <ecNumber evidence="1">2.7.7.8</ecNumber>
    </recommendedName>
    <alternativeName>
        <fullName evidence="1">Polynucleotide phosphorylase</fullName>
        <shortName evidence="1">PNPase</shortName>
    </alternativeName>
</protein>
<comment type="function">
    <text evidence="1">Involved in mRNA degradation. Catalyzes the phosphorolysis of single-stranded polyribonucleotides processively in the 3'- to 5'-direction.</text>
</comment>
<comment type="catalytic activity">
    <reaction evidence="1">
        <text>RNA(n+1) + phosphate = RNA(n) + a ribonucleoside 5'-diphosphate</text>
        <dbReference type="Rhea" id="RHEA:22096"/>
        <dbReference type="Rhea" id="RHEA-COMP:14527"/>
        <dbReference type="Rhea" id="RHEA-COMP:17342"/>
        <dbReference type="ChEBI" id="CHEBI:43474"/>
        <dbReference type="ChEBI" id="CHEBI:57930"/>
        <dbReference type="ChEBI" id="CHEBI:140395"/>
        <dbReference type="EC" id="2.7.7.8"/>
    </reaction>
</comment>
<comment type="cofactor">
    <cofactor evidence="1">
        <name>Mg(2+)</name>
        <dbReference type="ChEBI" id="CHEBI:18420"/>
    </cofactor>
</comment>
<comment type="subcellular location">
    <subcellularLocation>
        <location evidence="1">Cytoplasm</location>
    </subcellularLocation>
</comment>
<comment type="similarity">
    <text evidence="1">Belongs to the polyribonucleotide nucleotidyltransferase family.</text>
</comment>
<name>PNP_NEOSM</name>
<accession>Q2GEY8</accession>
<sequence>MFEIKESSMEWEGKSLHIKTGEVARQAAGAACVSYGGTVVLAVVTLQKDTAASKKTSDLSGLALVTNFLAKSYALGRIPNGFFKREGKLSEREVLASRVVDRAVRPLIEENLVNEVNIVCKLLAHGNRKVLPEIPALIAASAALQLSGIPFSGPVIGVDVDMRGSEVTCNEIRETEGGLELFVACTEESVVMVEAEASEASEEEVVNALSEALKSAKPVFSFINEFVKSVTTVKPIGVLYDNKELCEKVRAACSGQLESVYNERISSKEKRHNKLGQIYTDTFAQLSDDGYAESEVLFFIKKLEKEIVRKNVLEEGIRPDGRSLTEIRPISIALDYLPGTHGSALFTRGGTQSLVVATLGSYQDEQVMDDIDGERRESVLLHYNFLPYAVGEVGALRAPGRREIGHGRLALKAVKAVLPGKEVFPYTLRLVSEITESDGSSSMATVCGSSLALMDTGVPITKHVAGIAMGLITDGVRSAVLSDISGDEDMLGDMDFKVAGTRNGIVALQMDMKVRGISIATIRDALNQALAGRLHILEKMEHVIAKPRESLKDSAPKILCYKIDKDVVHKVIGSGGKTIRGISSDTSAKIDIDQNNYVYIMADTEEALMEAKTRVDMASGASDSNVPQLKIGELYDGKIVSVVDFGLFVVLPNKQEGLVHISEISKNRVNDIRADYTEGQAVTVRIKDIGSDGKIKLTMRIDEDRVGSGGSSSSPKKRFGAHPRKNGKDNRSNNSERGFNERSGSAEGSSISRKRFF</sequence>
<keyword id="KW-0963">Cytoplasm</keyword>
<keyword id="KW-0460">Magnesium</keyword>
<keyword id="KW-0479">Metal-binding</keyword>
<keyword id="KW-0548">Nucleotidyltransferase</keyword>
<keyword id="KW-0694">RNA-binding</keyword>
<keyword id="KW-0808">Transferase</keyword>
<gene>
    <name evidence="1" type="primary">pnp</name>
    <name type="ordered locus">NSE_0057</name>
</gene>
<evidence type="ECO:0000255" key="1">
    <source>
        <dbReference type="HAMAP-Rule" id="MF_01595"/>
    </source>
</evidence>
<evidence type="ECO:0000256" key="2">
    <source>
        <dbReference type="SAM" id="MobiDB-lite"/>
    </source>
</evidence>
<dbReference type="EC" id="2.7.7.8" evidence="1"/>
<dbReference type="EMBL" id="CP000237">
    <property type="protein sequence ID" value="ABD46123.1"/>
    <property type="molecule type" value="Genomic_DNA"/>
</dbReference>
<dbReference type="RefSeq" id="WP_011451464.1">
    <property type="nucleotide sequence ID" value="NC_007798.1"/>
</dbReference>
<dbReference type="SMR" id="Q2GEY8"/>
<dbReference type="STRING" id="222891.NSE_0057"/>
<dbReference type="KEGG" id="nse:NSE_0057"/>
<dbReference type="eggNOG" id="COG1185">
    <property type="taxonomic scope" value="Bacteria"/>
</dbReference>
<dbReference type="HOGENOM" id="CLU_004217_2_2_5"/>
<dbReference type="OrthoDB" id="9804305at2"/>
<dbReference type="Proteomes" id="UP000001942">
    <property type="component" value="Chromosome"/>
</dbReference>
<dbReference type="GO" id="GO:0005829">
    <property type="term" value="C:cytosol"/>
    <property type="evidence" value="ECO:0007669"/>
    <property type="project" value="TreeGrafter"/>
</dbReference>
<dbReference type="GO" id="GO:0000175">
    <property type="term" value="F:3'-5'-RNA exonuclease activity"/>
    <property type="evidence" value="ECO:0007669"/>
    <property type="project" value="TreeGrafter"/>
</dbReference>
<dbReference type="GO" id="GO:0000287">
    <property type="term" value="F:magnesium ion binding"/>
    <property type="evidence" value="ECO:0007669"/>
    <property type="project" value="UniProtKB-UniRule"/>
</dbReference>
<dbReference type="GO" id="GO:0004654">
    <property type="term" value="F:polyribonucleotide nucleotidyltransferase activity"/>
    <property type="evidence" value="ECO:0007669"/>
    <property type="project" value="UniProtKB-UniRule"/>
</dbReference>
<dbReference type="GO" id="GO:0003723">
    <property type="term" value="F:RNA binding"/>
    <property type="evidence" value="ECO:0007669"/>
    <property type="project" value="UniProtKB-UniRule"/>
</dbReference>
<dbReference type="GO" id="GO:0006402">
    <property type="term" value="P:mRNA catabolic process"/>
    <property type="evidence" value="ECO:0007669"/>
    <property type="project" value="UniProtKB-UniRule"/>
</dbReference>
<dbReference type="GO" id="GO:0006396">
    <property type="term" value="P:RNA processing"/>
    <property type="evidence" value="ECO:0007669"/>
    <property type="project" value="InterPro"/>
</dbReference>
<dbReference type="CDD" id="cd22430">
    <property type="entry name" value="KH-I_DDX43_DDX53"/>
    <property type="match status" value="1"/>
</dbReference>
<dbReference type="CDD" id="cd11364">
    <property type="entry name" value="RNase_PH_PNPase_2"/>
    <property type="match status" value="1"/>
</dbReference>
<dbReference type="FunFam" id="3.30.1370.10:FF:000001">
    <property type="entry name" value="Polyribonucleotide nucleotidyltransferase"/>
    <property type="match status" value="1"/>
</dbReference>
<dbReference type="FunFam" id="3.30.230.70:FF:000002">
    <property type="entry name" value="Polyribonucleotide nucleotidyltransferase"/>
    <property type="match status" value="1"/>
</dbReference>
<dbReference type="Gene3D" id="3.30.230.70">
    <property type="entry name" value="GHMP Kinase, N-terminal domain"/>
    <property type="match status" value="2"/>
</dbReference>
<dbReference type="Gene3D" id="3.30.1370.10">
    <property type="entry name" value="K Homology domain, type 1"/>
    <property type="match status" value="1"/>
</dbReference>
<dbReference type="Gene3D" id="2.40.50.140">
    <property type="entry name" value="Nucleic acid-binding proteins"/>
    <property type="match status" value="1"/>
</dbReference>
<dbReference type="HAMAP" id="MF_01595">
    <property type="entry name" value="PNPase"/>
    <property type="match status" value="1"/>
</dbReference>
<dbReference type="InterPro" id="IPR001247">
    <property type="entry name" value="ExoRNase_PH_dom1"/>
</dbReference>
<dbReference type="InterPro" id="IPR015847">
    <property type="entry name" value="ExoRNase_PH_dom2"/>
</dbReference>
<dbReference type="InterPro" id="IPR036345">
    <property type="entry name" value="ExoRNase_PH_dom2_sf"/>
</dbReference>
<dbReference type="InterPro" id="IPR004087">
    <property type="entry name" value="KH_dom"/>
</dbReference>
<dbReference type="InterPro" id="IPR004088">
    <property type="entry name" value="KH_dom_type_1"/>
</dbReference>
<dbReference type="InterPro" id="IPR036612">
    <property type="entry name" value="KH_dom_type_1_sf"/>
</dbReference>
<dbReference type="InterPro" id="IPR012340">
    <property type="entry name" value="NA-bd_OB-fold"/>
</dbReference>
<dbReference type="InterPro" id="IPR012162">
    <property type="entry name" value="PNPase"/>
</dbReference>
<dbReference type="InterPro" id="IPR027408">
    <property type="entry name" value="PNPase/RNase_PH_dom_sf"/>
</dbReference>
<dbReference type="InterPro" id="IPR015848">
    <property type="entry name" value="PNPase_PH_RNA-bd_bac/org-type"/>
</dbReference>
<dbReference type="InterPro" id="IPR036456">
    <property type="entry name" value="PNPase_PH_RNA-bd_sf"/>
</dbReference>
<dbReference type="InterPro" id="IPR020568">
    <property type="entry name" value="Ribosomal_Su5_D2-typ_SF"/>
</dbReference>
<dbReference type="InterPro" id="IPR003029">
    <property type="entry name" value="S1_domain"/>
</dbReference>
<dbReference type="NCBIfam" id="TIGR03591">
    <property type="entry name" value="polynuc_phos"/>
    <property type="match status" value="1"/>
</dbReference>
<dbReference type="NCBIfam" id="NF008805">
    <property type="entry name" value="PRK11824.1"/>
    <property type="match status" value="1"/>
</dbReference>
<dbReference type="PANTHER" id="PTHR11252">
    <property type="entry name" value="POLYRIBONUCLEOTIDE NUCLEOTIDYLTRANSFERASE"/>
    <property type="match status" value="1"/>
</dbReference>
<dbReference type="PANTHER" id="PTHR11252:SF0">
    <property type="entry name" value="POLYRIBONUCLEOTIDE NUCLEOTIDYLTRANSFERASE 1, MITOCHONDRIAL"/>
    <property type="match status" value="1"/>
</dbReference>
<dbReference type="Pfam" id="PF00013">
    <property type="entry name" value="KH_1"/>
    <property type="match status" value="1"/>
</dbReference>
<dbReference type="Pfam" id="PF03726">
    <property type="entry name" value="PNPase"/>
    <property type="match status" value="1"/>
</dbReference>
<dbReference type="Pfam" id="PF01138">
    <property type="entry name" value="RNase_PH"/>
    <property type="match status" value="2"/>
</dbReference>
<dbReference type="Pfam" id="PF03725">
    <property type="entry name" value="RNase_PH_C"/>
    <property type="match status" value="1"/>
</dbReference>
<dbReference type="Pfam" id="PF00575">
    <property type="entry name" value="S1"/>
    <property type="match status" value="1"/>
</dbReference>
<dbReference type="PIRSF" id="PIRSF005499">
    <property type="entry name" value="PNPase"/>
    <property type="match status" value="1"/>
</dbReference>
<dbReference type="SMART" id="SM00322">
    <property type="entry name" value="KH"/>
    <property type="match status" value="1"/>
</dbReference>
<dbReference type="SMART" id="SM00316">
    <property type="entry name" value="S1"/>
    <property type="match status" value="1"/>
</dbReference>
<dbReference type="SUPFAM" id="SSF54791">
    <property type="entry name" value="Eukaryotic type KH-domain (KH-domain type I)"/>
    <property type="match status" value="1"/>
</dbReference>
<dbReference type="SUPFAM" id="SSF50249">
    <property type="entry name" value="Nucleic acid-binding proteins"/>
    <property type="match status" value="1"/>
</dbReference>
<dbReference type="SUPFAM" id="SSF46915">
    <property type="entry name" value="Polynucleotide phosphorylase/guanosine pentaphosphate synthase (PNPase/GPSI), domain 3"/>
    <property type="match status" value="1"/>
</dbReference>
<dbReference type="SUPFAM" id="SSF55666">
    <property type="entry name" value="Ribonuclease PH domain 2-like"/>
    <property type="match status" value="2"/>
</dbReference>
<dbReference type="SUPFAM" id="SSF54211">
    <property type="entry name" value="Ribosomal protein S5 domain 2-like"/>
    <property type="match status" value="2"/>
</dbReference>
<dbReference type="PROSITE" id="PS50084">
    <property type="entry name" value="KH_TYPE_1"/>
    <property type="match status" value="1"/>
</dbReference>
<dbReference type="PROSITE" id="PS50126">
    <property type="entry name" value="S1"/>
    <property type="match status" value="1"/>
</dbReference>